<gene>
    <name evidence="1" type="primary">pcm</name>
    <name type="ordered locus">amb2519</name>
</gene>
<feature type="chain" id="PRO_0000351874" description="Protein-L-isoaspartate O-methyltransferase">
    <location>
        <begin position="1"/>
        <end position="214"/>
    </location>
</feature>
<feature type="active site" evidence="1">
    <location>
        <position position="61"/>
    </location>
</feature>
<keyword id="KW-0963">Cytoplasm</keyword>
<keyword id="KW-0489">Methyltransferase</keyword>
<keyword id="KW-0949">S-adenosyl-L-methionine</keyword>
<keyword id="KW-0808">Transferase</keyword>
<protein>
    <recommendedName>
        <fullName evidence="1">Protein-L-isoaspartate O-methyltransferase</fullName>
        <ecNumber evidence="1">2.1.1.77</ecNumber>
    </recommendedName>
    <alternativeName>
        <fullName evidence="1">L-isoaspartyl protein carboxyl methyltransferase</fullName>
    </alternativeName>
    <alternativeName>
        <fullName evidence="1">Protein L-isoaspartyl methyltransferase</fullName>
    </alternativeName>
    <alternativeName>
        <fullName evidence="1">Protein-beta-aspartate methyltransferase</fullName>
        <shortName evidence="1">PIMT</shortName>
    </alternativeName>
</protein>
<name>PIMT_PARM1</name>
<comment type="function">
    <text evidence="1">Catalyzes the methyl esterification of L-isoaspartyl residues in peptides and proteins that result from spontaneous decomposition of normal L-aspartyl and L-asparaginyl residues. It plays a role in the repair and/or degradation of damaged proteins.</text>
</comment>
<comment type="catalytic activity">
    <reaction evidence="1">
        <text>[protein]-L-isoaspartate + S-adenosyl-L-methionine = [protein]-L-isoaspartate alpha-methyl ester + S-adenosyl-L-homocysteine</text>
        <dbReference type="Rhea" id="RHEA:12705"/>
        <dbReference type="Rhea" id="RHEA-COMP:12143"/>
        <dbReference type="Rhea" id="RHEA-COMP:12144"/>
        <dbReference type="ChEBI" id="CHEBI:57856"/>
        <dbReference type="ChEBI" id="CHEBI:59789"/>
        <dbReference type="ChEBI" id="CHEBI:90596"/>
        <dbReference type="ChEBI" id="CHEBI:90598"/>
        <dbReference type="EC" id="2.1.1.77"/>
    </reaction>
</comment>
<comment type="subcellular location">
    <subcellularLocation>
        <location evidence="1">Cytoplasm</location>
    </subcellularLocation>
</comment>
<comment type="similarity">
    <text evidence="1">Belongs to the methyltransferase superfamily. L-isoaspartyl/D-aspartyl protein methyltransferase family.</text>
</comment>
<reference key="1">
    <citation type="journal article" date="2005" name="DNA Res.">
        <title>Complete genome sequence of the facultative anaerobic magnetotactic bacterium Magnetospirillum sp. strain AMB-1.</title>
        <authorList>
            <person name="Matsunaga T."/>
            <person name="Okamura Y."/>
            <person name="Fukuda Y."/>
            <person name="Wahyudi A.T."/>
            <person name="Murase Y."/>
            <person name="Takeyama H."/>
        </authorList>
    </citation>
    <scope>NUCLEOTIDE SEQUENCE [LARGE SCALE GENOMIC DNA]</scope>
    <source>
        <strain>ATCC 700264 / AMB-1</strain>
    </source>
</reference>
<proteinExistence type="inferred from homology"/>
<sequence length="214" mass="23663">MKKAEPRVIRLLMELRRMGVVDTRVLSAIERIPRALFVAEPFLDQAYENTALPIGCAQTISQPLVVGLMSQALEVGERMKVLEIGTGSGYQAAVLAKLCRRLYSVERHKPLLAEAEARFKHLRLHNITCRAADGSRGWPEQAPFDRIMVTAAAPDIPPALVDQLKPDGIMVLPLGDVGGIDQELVRITKTDRGIDIQPFLPVRFVPLVEGIPEE</sequence>
<dbReference type="EC" id="2.1.1.77" evidence="1"/>
<dbReference type="EMBL" id="AP007255">
    <property type="protein sequence ID" value="BAE51323.1"/>
    <property type="molecule type" value="Genomic_DNA"/>
</dbReference>
<dbReference type="RefSeq" id="WP_011384900.1">
    <property type="nucleotide sequence ID" value="NC_007626.1"/>
</dbReference>
<dbReference type="SMR" id="Q2W4A2"/>
<dbReference type="STRING" id="342108.amb2519"/>
<dbReference type="KEGG" id="mag:amb2519"/>
<dbReference type="HOGENOM" id="CLU_055432_2_0_5"/>
<dbReference type="OrthoDB" id="9810066at2"/>
<dbReference type="Proteomes" id="UP000007058">
    <property type="component" value="Chromosome"/>
</dbReference>
<dbReference type="GO" id="GO:0005737">
    <property type="term" value="C:cytoplasm"/>
    <property type="evidence" value="ECO:0007669"/>
    <property type="project" value="UniProtKB-SubCell"/>
</dbReference>
<dbReference type="GO" id="GO:0004719">
    <property type="term" value="F:protein-L-isoaspartate (D-aspartate) O-methyltransferase activity"/>
    <property type="evidence" value="ECO:0007669"/>
    <property type="project" value="UniProtKB-UniRule"/>
</dbReference>
<dbReference type="GO" id="GO:0032259">
    <property type="term" value="P:methylation"/>
    <property type="evidence" value="ECO:0007669"/>
    <property type="project" value="UniProtKB-KW"/>
</dbReference>
<dbReference type="GO" id="GO:0036211">
    <property type="term" value="P:protein modification process"/>
    <property type="evidence" value="ECO:0007669"/>
    <property type="project" value="UniProtKB-UniRule"/>
</dbReference>
<dbReference type="GO" id="GO:0030091">
    <property type="term" value="P:protein repair"/>
    <property type="evidence" value="ECO:0007669"/>
    <property type="project" value="UniProtKB-UniRule"/>
</dbReference>
<dbReference type="CDD" id="cd02440">
    <property type="entry name" value="AdoMet_MTases"/>
    <property type="match status" value="1"/>
</dbReference>
<dbReference type="FunFam" id="3.40.50.150:FF:000010">
    <property type="entry name" value="Protein-L-isoaspartate O-methyltransferase"/>
    <property type="match status" value="1"/>
</dbReference>
<dbReference type="Gene3D" id="3.40.50.150">
    <property type="entry name" value="Vaccinia Virus protein VP39"/>
    <property type="match status" value="1"/>
</dbReference>
<dbReference type="HAMAP" id="MF_00090">
    <property type="entry name" value="PIMT"/>
    <property type="match status" value="1"/>
</dbReference>
<dbReference type="InterPro" id="IPR000682">
    <property type="entry name" value="PCMT"/>
</dbReference>
<dbReference type="InterPro" id="IPR029063">
    <property type="entry name" value="SAM-dependent_MTases_sf"/>
</dbReference>
<dbReference type="NCBIfam" id="TIGR00080">
    <property type="entry name" value="pimt"/>
    <property type="match status" value="1"/>
</dbReference>
<dbReference type="NCBIfam" id="NF001453">
    <property type="entry name" value="PRK00312.1"/>
    <property type="match status" value="1"/>
</dbReference>
<dbReference type="PANTHER" id="PTHR11579">
    <property type="entry name" value="PROTEIN-L-ISOASPARTATE O-METHYLTRANSFERASE"/>
    <property type="match status" value="1"/>
</dbReference>
<dbReference type="PANTHER" id="PTHR11579:SF0">
    <property type="entry name" value="PROTEIN-L-ISOASPARTATE(D-ASPARTATE) O-METHYLTRANSFERASE"/>
    <property type="match status" value="1"/>
</dbReference>
<dbReference type="Pfam" id="PF01135">
    <property type="entry name" value="PCMT"/>
    <property type="match status" value="1"/>
</dbReference>
<dbReference type="SUPFAM" id="SSF53335">
    <property type="entry name" value="S-adenosyl-L-methionine-dependent methyltransferases"/>
    <property type="match status" value="1"/>
</dbReference>
<dbReference type="PROSITE" id="PS01279">
    <property type="entry name" value="PCMT"/>
    <property type="match status" value="1"/>
</dbReference>
<organism>
    <name type="scientific">Paramagnetospirillum magneticum (strain ATCC 700264 / AMB-1)</name>
    <name type="common">Magnetospirillum magneticum</name>
    <dbReference type="NCBI Taxonomy" id="342108"/>
    <lineage>
        <taxon>Bacteria</taxon>
        <taxon>Pseudomonadati</taxon>
        <taxon>Pseudomonadota</taxon>
        <taxon>Alphaproteobacteria</taxon>
        <taxon>Rhodospirillales</taxon>
        <taxon>Magnetospirillaceae</taxon>
        <taxon>Paramagnetospirillum</taxon>
    </lineage>
</organism>
<evidence type="ECO:0000255" key="1">
    <source>
        <dbReference type="HAMAP-Rule" id="MF_00090"/>
    </source>
</evidence>
<accession>Q2W4A2</accession>